<keyword id="KW-0150">Chloroplast</keyword>
<keyword id="KW-0934">Plastid</keyword>
<keyword id="KW-0687">Ribonucleoprotein</keyword>
<keyword id="KW-0689">Ribosomal protein</keyword>
<reference key="1">
    <citation type="journal article" date="2005" name="BMC Biol.">
        <title>The complete chloroplast DNA sequences of the charophycean green algae Staurastrum and Zygnema reveal that the chloroplast genome underwent extensive changes during the evolution of the Zygnematales.</title>
        <authorList>
            <person name="Turmel M."/>
            <person name="Otis C."/>
            <person name="Lemieux C."/>
        </authorList>
    </citation>
    <scope>NUCLEOTIDE SEQUENCE [LARGE SCALE GENOMIC DNA]</scope>
</reference>
<dbReference type="EMBL" id="AY958086">
    <property type="protein sequence ID" value="AAX45869.1"/>
    <property type="molecule type" value="Genomic_DNA"/>
</dbReference>
<dbReference type="RefSeq" id="YP_636478.1">
    <property type="nucleotide sequence ID" value="NC_008117.1"/>
</dbReference>
<dbReference type="SMR" id="Q32RP8"/>
<dbReference type="GeneID" id="4108189"/>
<dbReference type="GO" id="GO:0009507">
    <property type="term" value="C:chloroplast"/>
    <property type="evidence" value="ECO:0007669"/>
    <property type="project" value="UniProtKB-SubCell"/>
</dbReference>
<dbReference type="GO" id="GO:0005739">
    <property type="term" value="C:mitochondrion"/>
    <property type="evidence" value="ECO:0007669"/>
    <property type="project" value="GOC"/>
</dbReference>
<dbReference type="GO" id="GO:0015935">
    <property type="term" value="C:small ribosomal subunit"/>
    <property type="evidence" value="ECO:0007669"/>
    <property type="project" value="TreeGrafter"/>
</dbReference>
<dbReference type="GO" id="GO:0003735">
    <property type="term" value="F:structural constituent of ribosome"/>
    <property type="evidence" value="ECO:0007669"/>
    <property type="project" value="InterPro"/>
</dbReference>
<dbReference type="GO" id="GO:0032543">
    <property type="term" value="P:mitochondrial translation"/>
    <property type="evidence" value="ECO:0007669"/>
    <property type="project" value="TreeGrafter"/>
</dbReference>
<dbReference type="Gene3D" id="3.30.1320.10">
    <property type="match status" value="1"/>
</dbReference>
<dbReference type="HAMAP" id="MF_00385">
    <property type="entry name" value="Ribosomal_bS16"/>
    <property type="match status" value="1"/>
</dbReference>
<dbReference type="InterPro" id="IPR000307">
    <property type="entry name" value="Ribosomal_bS16"/>
</dbReference>
<dbReference type="InterPro" id="IPR020592">
    <property type="entry name" value="Ribosomal_bS16_CS"/>
</dbReference>
<dbReference type="InterPro" id="IPR023803">
    <property type="entry name" value="Ribosomal_bS16_dom_sf"/>
</dbReference>
<dbReference type="NCBIfam" id="TIGR00002">
    <property type="entry name" value="S16"/>
    <property type="match status" value="1"/>
</dbReference>
<dbReference type="PANTHER" id="PTHR12919">
    <property type="entry name" value="30S RIBOSOMAL PROTEIN S16"/>
    <property type="match status" value="1"/>
</dbReference>
<dbReference type="PANTHER" id="PTHR12919:SF20">
    <property type="entry name" value="SMALL RIBOSOMAL SUBUNIT PROTEIN BS16M"/>
    <property type="match status" value="1"/>
</dbReference>
<dbReference type="Pfam" id="PF00886">
    <property type="entry name" value="Ribosomal_S16"/>
    <property type="match status" value="1"/>
</dbReference>
<dbReference type="SUPFAM" id="SSF54565">
    <property type="entry name" value="Ribosomal protein S16"/>
    <property type="match status" value="1"/>
</dbReference>
<dbReference type="PROSITE" id="PS00732">
    <property type="entry name" value="RIBOSOMAL_S16"/>
    <property type="match status" value="1"/>
</dbReference>
<geneLocation type="chloroplast"/>
<feature type="chain" id="PRO_0000276964" description="Small ribosomal subunit protein bS16c">
    <location>
        <begin position="1"/>
        <end position="87"/>
    </location>
</feature>
<accession>Q32RP8</accession>
<gene>
    <name evidence="1" type="primary">rps16</name>
</gene>
<protein>
    <recommendedName>
        <fullName evidence="1">Small ribosomal subunit protein bS16c</fullName>
    </recommendedName>
    <alternativeName>
        <fullName evidence="2">30S ribosomal protein S16, chloroplastic</fullName>
    </alternativeName>
</protein>
<comment type="subcellular location">
    <subcellularLocation>
        <location>Plastid</location>
        <location>Chloroplast</location>
    </subcellularLocation>
</comment>
<comment type="similarity">
    <text evidence="1">Belongs to the bacterial ribosomal protein bS16 family.</text>
</comment>
<sequence>MVKLRLKRYGRKQQPTYRIIAIDVKSRRQGRALKEVGFYDPRKDQTHLDVATIITFIQQGAQPTDTVSHILNRAGVFEQIHAMSIHE</sequence>
<organism>
    <name type="scientific">Zygnema circumcarinatum</name>
    <name type="common">Green alga</name>
    <dbReference type="NCBI Taxonomy" id="35869"/>
    <lineage>
        <taxon>Eukaryota</taxon>
        <taxon>Viridiplantae</taxon>
        <taxon>Streptophyta</taxon>
        <taxon>Zygnematophyceae</taxon>
        <taxon>Zygnematophycidae</taxon>
        <taxon>Zygnematales</taxon>
        <taxon>Zygnemataceae</taxon>
        <taxon>Zygnema</taxon>
    </lineage>
</organism>
<proteinExistence type="inferred from homology"/>
<evidence type="ECO:0000255" key="1">
    <source>
        <dbReference type="HAMAP-Rule" id="MF_00385"/>
    </source>
</evidence>
<evidence type="ECO:0000305" key="2"/>
<name>RR16_ZYGCR</name>